<sequence>MVDASGRAAAEGWRKMEAPPDGAADLVPLDRYDAARAKIAANLQWICAKAYGRDNIPEDLRDPFYVDQYEQEHIKPPVIKLLLSSELYCRVCSLILKGDQVAALQGHQSVIQALSRKGIYVMESDDTPVTESDLSRAPIKMSAHMAMVDALMMAYTVEMISIEKVVASVKRFSTFSASKELPYDLEDAMVFWINKVNLKMREITEKEVKLKQQLLESPAHQKVRYRREHLSARQSPYFPLLEDLMRDGSDGAALLAVIHYYCPEQMKLDDICLKEVTSMADSLYNIRLLREFSNEYLNKCFYLTLEDMLYAPLVLKPNVMVFIAELFWWFENVKPDFVQPRDVQELKDAKTVLHQKSSRPPVPISNATKRSFLGSPAAGTLAELQPPVQLPAEGCHRHYLHPEEPEYLGKGTAAFSPSHPLLPLRQKQQKSIQGEDIPDQRHRSNSLTRVDGQPRGAAIAWPEKKTRPASQPTPFALHHAASCEVDPSSGDSISLARSISKDSLASNIVNLTPQNQPHPTATKSHGKSLLSNVSIEDEEEELVAIVRADVVPQQADPEFPRASPRALGLTANARSPQGQLDTSESKPDSFFLEPLMPAVLKPAKEKQVITKEDERGEGRPRSIVSRRPSEGPQPLVRRKMTGSRDLNRTFTPIPCSEFPMGIDPTETGPLSVETAGEVCGGPLALGGFDPFPQGPSTDGFFLHVGRADEDTEGRLYVSCSKSPNSHDSEPWTLLRQDSDSDVVDIEEAEHDFMGEAHPVVFSRYIGEEESAKLQEDMKVKEHEDKDDASGRSSPCLSTASQMSSVSMASGSVKMTSFAERKLQRLNSCETKSSTSSSQKTTPDASESCPAPLTTWRQKREQSPSQHGKDPASLLASELVQLHMQLEEKRRAIEAQKKKMEALSARQRLKLGKAAFLHVVKKGKAEAAPPLRPEHFAKEYSQHNGEDCGDAVSKTEDFLVKEEQREELLHEPQDVDKESLAFAQQHKAKDPVALHELERNKVISAALLEDTVGEVVDVNECDLSIEKLNETISTLQQAILKISQQQEQLLMKSPTVPVPGSKNNSQDHKVKAPVHFVEPLSPTGVAGHRKAPRLGQGRNSRSGRPAELKVPKDRPQGSSRSKTPTPSVETLPHLRPFPASSHPRTPTDPGLDSALEPSGDPHGKCLFDSYRLHDESNQRTLTLSSSKDANILSEQMSLKEVLDASVKEVGSSSSDVSGKESVPVEEPLRSRASLIEVDLSDLKAPDEDGELVSLDGSADLVSEGDQKPGVGFFFKDEQKAEDELAKKRAAFLLKQQRKAEEARVRKQQLEAEVELKRDEARRKAEEDRVRKEEEKARRELIKQEYLRRKQQQILEEQGLGKPKSKPKKPRPKSVHREESCSDSGTKCSSTPDNLSRTQSGSSLSLASAATTEPESVHSGGTPSQRVESMEALPILSRNPSRSTDRDWETASAASSLASVAEYTGPKLFKEPSSKSNKPIIHNAISHCCLAGKVNEPHKNSILEELEKCDANHYIILFRDAGCQFRALYCYYPDTEEIYKLTGTGPKNITKKMIDKLYKYSSDRKQFNLIPAKTMSVSVDALTIHNHLWQPKRPAVPKKAQTRK</sequence>
<protein>
    <recommendedName>
        <fullName>Calmodulin-regulated spectrin-associated protein 1</fullName>
    </recommendedName>
</protein>
<dbReference type="EMBL" id="AJ519841">
    <property type="protein sequence ID" value="CAD58627.1"/>
    <property type="molecule type" value="mRNA"/>
</dbReference>
<dbReference type="EMBL" id="AL158822">
    <property type="status" value="NOT_ANNOTATED_CDS"/>
    <property type="molecule type" value="Genomic_DNA"/>
</dbReference>
<dbReference type="EMBL" id="AL353636">
    <property type="status" value="NOT_ANNOTATED_CDS"/>
    <property type="molecule type" value="Genomic_DNA"/>
</dbReference>
<dbReference type="EMBL" id="AL355574">
    <property type="status" value="NOT_ANNOTATED_CDS"/>
    <property type="molecule type" value="Genomic_DNA"/>
</dbReference>
<dbReference type="EMBL" id="BC010646">
    <property type="protein sequence ID" value="AAH10646.1"/>
    <property type="molecule type" value="mRNA"/>
</dbReference>
<dbReference type="EMBL" id="BC012778">
    <property type="protein sequence ID" value="AAH12778.2"/>
    <property type="molecule type" value="mRNA"/>
</dbReference>
<dbReference type="EMBL" id="BC130580">
    <property type="protein sequence ID" value="AAI30581.1"/>
    <property type="status" value="ALT_INIT"/>
    <property type="molecule type" value="mRNA"/>
</dbReference>
<dbReference type="EMBL" id="AL117634">
    <property type="protein sequence ID" value="CAB56024.2"/>
    <property type="molecule type" value="mRNA"/>
</dbReference>
<dbReference type="EMBL" id="AL834528">
    <property type="protein sequence ID" value="CAD39184.1"/>
    <property type="molecule type" value="mRNA"/>
</dbReference>
<dbReference type="CCDS" id="CCDS35176.2">
    <molecule id="Q5T5Y3-1"/>
</dbReference>
<dbReference type="CCDS" id="CCDS94531.1">
    <molecule id="Q5T5Y3-2"/>
</dbReference>
<dbReference type="PIR" id="T17334">
    <property type="entry name" value="T17334"/>
</dbReference>
<dbReference type="RefSeq" id="NP_001397960.1">
    <molecule id="Q5T5Y3-2"/>
    <property type="nucleotide sequence ID" value="NM_001411031.1"/>
</dbReference>
<dbReference type="RefSeq" id="NP_056262.3">
    <molecule id="Q5T5Y3-1"/>
    <property type="nucleotide sequence ID" value="NM_015447.4"/>
</dbReference>
<dbReference type="RefSeq" id="XP_005263453.1">
    <molecule id="Q5T5Y3-3"/>
    <property type="nucleotide sequence ID" value="XM_005263396.4"/>
</dbReference>
<dbReference type="RefSeq" id="XP_005263454.1">
    <property type="nucleotide sequence ID" value="XM_005263397.1"/>
</dbReference>
<dbReference type="RefSeq" id="XP_054217998.1">
    <molecule id="Q5T5Y3-3"/>
    <property type="nucleotide sequence ID" value="XM_054362023.1"/>
</dbReference>
<dbReference type="PDB" id="5M54">
    <property type="method" value="EM"/>
    <property type="resolution" value="8.00 A"/>
    <property type="chains" value="C=1473-1589"/>
</dbReference>
<dbReference type="PDB" id="5M5C">
    <property type="method" value="EM"/>
    <property type="resolution" value="4.80 A"/>
    <property type="chains" value="C=1472-1589"/>
</dbReference>
<dbReference type="PDB" id="6QUS">
    <property type="method" value="EM"/>
    <property type="resolution" value="3.70 A"/>
    <property type="chains" value="I=1462-1602"/>
</dbReference>
<dbReference type="PDB" id="6QVJ">
    <property type="method" value="EM"/>
    <property type="resolution" value="3.80 A"/>
    <property type="chains" value="I=1462-1602"/>
</dbReference>
<dbReference type="PDBsum" id="5M54"/>
<dbReference type="PDBsum" id="5M5C"/>
<dbReference type="PDBsum" id="6QUS"/>
<dbReference type="PDBsum" id="6QVJ"/>
<dbReference type="EMDB" id="EMD-3444"/>
<dbReference type="EMDB" id="EMD-4156"/>
<dbReference type="EMDB" id="EMD-4643"/>
<dbReference type="EMDB" id="EMD-4654"/>
<dbReference type="SMR" id="Q5T5Y3"/>
<dbReference type="BioGRID" id="127632">
    <property type="interactions" value="106"/>
</dbReference>
<dbReference type="FunCoup" id="Q5T5Y3">
    <property type="interactions" value="1309"/>
</dbReference>
<dbReference type="IntAct" id="Q5T5Y3">
    <property type="interactions" value="65"/>
</dbReference>
<dbReference type="MINT" id="Q5T5Y3"/>
<dbReference type="STRING" id="9606.ENSP00000374183"/>
<dbReference type="GlyGen" id="Q5T5Y3">
    <property type="glycosylation" value="5 sites, 1 N-linked glycan (1 site), 1 O-linked glycan (3 sites)"/>
</dbReference>
<dbReference type="iPTMnet" id="Q5T5Y3"/>
<dbReference type="MetOSite" id="Q5T5Y3"/>
<dbReference type="PhosphoSitePlus" id="Q5T5Y3"/>
<dbReference type="BioMuta" id="CAMSAP1"/>
<dbReference type="DMDM" id="166991445"/>
<dbReference type="jPOST" id="Q5T5Y3"/>
<dbReference type="MassIVE" id="Q5T5Y3"/>
<dbReference type="PaxDb" id="9606-ENSP00000374183"/>
<dbReference type="PeptideAtlas" id="Q5T5Y3"/>
<dbReference type="ProteomicsDB" id="64558">
    <molecule id="Q5T5Y3-1"/>
</dbReference>
<dbReference type="ProteomicsDB" id="64559">
    <molecule id="Q5T5Y3-2"/>
</dbReference>
<dbReference type="ProteomicsDB" id="64560">
    <molecule id="Q5T5Y3-3"/>
</dbReference>
<dbReference type="Pumba" id="Q5T5Y3"/>
<dbReference type="Antibodypedia" id="18656">
    <property type="antibodies" value="128 antibodies from 20 providers"/>
</dbReference>
<dbReference type="Ensembl" id="ENST00000312405.10">
    <molecule id="Q5T5Y3-2"/>
    <property type="protein sequence ID" value="ENSP00000312463.6"/>
    <property type="gene ID" value="ENSG00000130559.19"/>
</dbReference>
<dbReference type="Ensembl" id="ENST00000389532.9">
    <molecule id="Q5T5Y3-1"/>
    <property type="protein sequence ID" value="ENSP00000374183.4"/>
    <property type="gene ID" value="ENSG00000130559.19"/>
</dbReference>
<dbReference type="Ensembl" id="ENST00000409386.3">
    <molecule id="Q5T5Y3-3"/>
    <property type="protein sequence ID" value="ENSP00000386420.3"/>
    <property type="gene ID" value="ENSG00000130559.19"/>
</dbReference>
<dbReference type="GeneID" id="157922"/>
<dbReference type="KEGG" id="hsa:157922"/>
<dbReference type="MANE-Select" id="ENST00000389532.9">
    <property type="protein sequence ID" value="ENSP00000374183.4"/>
    <property type="RefSeq nucleotide sequence ID" value="NM_015447.4"/>
    <property type="RefSeq protein sequence ID" value="NP_056262.3"/>
</dbReference>
<dbReference type="UCSC" id="uc004cgr.5">
    <molecule id="Q5T5Y3-1"/>
    <property type="organism name" value="human"/>
</dbReference>
<dbReference type="AGR" id="HGNC:19946"/>
<dbReference type="CTD" id="157922"/>
<dbReference type="DisGeNET" id="157922"/>
<dbReference type="GeneCards" id="CAMSAP1"/>
<dbReference type="HGNC" id="HGNC:19946">
    <property type="gene designation" value="CAMSAP1"/>
</dbReference>
<dbReference type="HPA" id="ENSG00000130559">
    <property type="expression patterns" value="Tissue enhanced (retina)"/>
</dbReference>
<dbReference type="MalaCards" id="CAMSAP1"/>
<dbReference type="MIM" id="613774">
    <property type="type" value="gene"/>
</dbReference>
<dbReference type="MIM" id="620316">
    <property type="type" value="phenotype"/>
</dbReference>
<dbReference type="neXtProt" id="NX_Q5T5Y3"/>
<dbReference type="OpenTargets" id="ENSG00000130559"/>
<dbReference type="PharmGKB" id="PA134866541"/>
<dbReference type="VEuPathDB" id="HostDB:ENSG00000130559"/>
<dbReference type="eggNOG" id="KOG3654">
    <property type="taxonomic scope" value="Eukaryota"/>
</dbReference>
<dbReference type="GeneTree" id="ENSGT00950000182975"/>
<dbReference type="HOGENOM" id="CLU_004833_1_0_1"/>
<dbReference type="InParanoid" id="Q5T5Y3"/>
<dbReference type="OMA" id="GTEWRAS"/>
<dbReference type="OrthoDB" id="2125658at2759"/>
<dbReference type="PAN-GO" id="Q5T5Y3">
    <property type="GO annotations" value="4 GO annotations based on evolutionary models"/>
</dbReference>
<dbReference type="PhylomeDB" id="Q5T5Y3"/>
<dbReference type="TreeFam" id="TF315529"/>
<dbReference type="PathwayCommons" id="Q5T5Y3"/>
<dbReference type="SignaLink" id="Q5T5Y3"/>
<dbReference type="BioGRID-ORCS" id="157922">
    <property type="hits" value="21 hits in 1154 CRISPR screens"/>
</dbReference>
<dbReference type="CD-CODE" id="DEE660B4">
    <property type="entry name" value="Stress granule"/>
</dbReference>
<dbReference type="ChiTaRS" id="CAMSAP1">
    <property type="organism name" value="human"/>
</dbReference>
<dbReference type="GenomeRNAi" id="157922"/>
<dbReference type="Pharos" id="Q5T5Y3">
    <property type="development level" value="Tbio"/>
</dbReference>
<dbReference type="PRO" id="PR:Q5T5Y3"/>
<dbReference type="Proteomes" id="UP000005640">
    <property type="component" value="Chromosome 9"/>
</dbReference>
<dbReference type="RNAct" id="Q5T5Y3">
    <property type="molecule type" value="protein"/>
</dbReference>
<dbReference type="Bgee" id="ENSG00000130559">
    <property type="expression patterns" value="Expressed in secondary oocyte and 200 other cell types or tissues"/>
</dbReference>
<dbReference type="ExpressionAtlas" id="Q5T5Y3">
    <property type="expression patterns" value="baseline and differential"/>
</dbReference>
<dbReference type="GO" id="GO:0005737">
    <property type="term" value="C:cytoplasm"/>
    <property type="evidence" value="ECO:0007669"/>
    <property type="project" value="UniProtKB-KW"/>
</dbReference>
<dbReference type="GO" id="GO:0005874">
    <property type="term" value="C:microtubule"/>
    <property type="evidence" value="ECO:0000314"/>
    <property type="project" value="UniProtKB"/>
</dbReference>
<dbReference type="GO" id="GO:0005516">
    <property type="term" value="F:calmodulin binding"/>
    <property type="evidence" value="ECO:0000250"/>
    <property type="project" value="UniProtKB"/>
</dbReference>
<dbReference type="GO" id="GO:0008017">
    <property type="term" value="F:microtubule binding"/>
    <property type="evidence" value="ECO:0000314"/>
    <property type="project" value="UniProtKB"/>
</dbReference>
<dbReference type="GO" id="GO:0051011">
    <property type="term" value="F:microtubule minus-end binding"/>
    <property type="evidence" value="ECO:0000314"/>
    <property type="project" value="UniProtKB"/>
</dbReference>
<dbReference type="GO" id="GO:0030507">
    <property type="term" value="F:spectrin binding"/>
    <property type="evidence" value="ECO:0000314"/>
    <property type="project" value="UniProtKB"/>
</dbReference>
<dbReference type="GO" id="GO:0007010">
    <property type="term" value="P:cytoskeleton organization"/>
    <property type="evidence" value="ECO:0000315"/>
    <property type="project" value="UniProtKB"/>
</dbReference>
<dbReference type="GO" id="GO:0000226">
    <property type="term" value="P:microtubule cytoskeleton organization"/>
    <property type="evidence" value="ECO:0000314"/>
    <property type="project" value="UniProtKB"/>
</dbReference>
<dbReference type="GO" id="GO:0031175">
    <property type="term" value="P:neuron projection development"/>
    <property type="evidence" value="ECO:0000315"/>
    <property type="project" value="UniProtKB"/>
</dbReference>
<dbReference type="GO" id="GO:0022604">
    <property type="term" value="P:regulation of cell morphogenesis"/>
    <property type="evidence" value="ECO:0000315"/>
    <property type="project" value="UniProtKB"/>
</dbReference>
<dbReference type="GO" id="GO:0031113">
    <property type="term" value="P:regulation of microtubule polymerization"/>
    <property type="evidence" value="ECO:0000314"/>
    <property type="project" value="UniProtKB"/>
</dbReference>
<dbReference type="CDD" id="cd22265">
    <property type="entry name" value="UDM1_RNF168"/>
    <property type="match status" value="1"/>
</dbReference>
<dbReference type="FunFam" id="3.10.20.360:FF:000001">
    <property type="entry name" value="Calmodulin-regulated spectrin-associated protein 3 isoform 2"/>
    <property type="match status" value="1"/>
</dbReference>
<dbReference type="Gene3D" id="3.10.20.360">
    <property type="entry name" value="CKK domain"/>
    <property type="match status" value="1"/>
</dbReference>
<dbReference type="InterPro" id="IPR032940">
    <property type="entry name" value="CAMSAP"/>
</dbReference>
<dbReference type="InterPro" id="IPR022613">
    <property type="entry name" value="CAMSAP-like_CH_dom"/>
</dbReference>
<dbReference type="InterPro" id="IPR031372">
    <property type="entry name" value="CAMSAP_CC1"/>
</dbReference>
<dbReference type="InterPro" id="IPR001715">
    <property type="entry name" value="CH_dom"/>
</dbReference>
<dbReference type="InterPro" id="IPR036872">
    <property type="entry name" value="CH_dom_sf"/>
</dbReference>
<dbReference type="InterPro" id="IPR038209">
    <property type="entry name" value="CKK_dom_sf"/>
</dbReference>
<dbReference type="InterPro" id="IPR014797">
    <property type="entry name" value="CKK_domain"/>
</dbReference>
<dbReference type="InterPro" id="IPR011033">
    <property type="entry name" value="PRC_barrel-like_sf"/>
</dbReference>
<dbReference type="PANTHER" id="PTHR21595:SF3">
    <property type="entry name" value="CALMODULIN-REGULATED SPECTRIN-ASSOCIATED PROTEIN 1"/>
    <property type="match status" value="1"/>
</dbReference>
<dbReference type="PANTHER" id="PTHR21595">
    <property type="entry name" value="PATRONIN"/>
    <property type="match status" value="1"/>
</dbReference>
<dbReference type="Pfam" id="PF17095">
    <property type="entry name" value="CAMSAP_CC1"/>
    <property type="match status" value="1"/>
</dbReference>
<dbReference type="Pfam" id="PF11971">
    <property type="entry name" value="CAMSAP_CH"/>
    <property type="match status" value="1"/>
</dbReference>
<dbReference type="Pfam" id="PF08683">
    <property type="entry name" value="CAMSAP_CKK"/>
    <property type="match status" value="1"/>
</dbReference>
<dbReference type="SMART" id="SM01051">
    <property type="entry name" value="CAMSAP_CKK"/>
    <property type="match status" value="1"/>
</dbReference>
<dbReference type="SUPFAM" id="SSF47576">
    <property type="entry name" value="Calponin-homology domain, CH-domain"/>
    <property type="match status" value="1"/>
</dbReference>
<dbReference type="SUPFAM" id="SSF50346">
    <property type="entry name" value="PRC-barrel domain"/>
    <property type="match status" value="1"/>
</dbReference>
<dbReference type="PROSITE" id="PS50021">
    <property type="entry name" value="CH"/>
    <property type="match status" value="1"/>
</dbReference>
<dbReference type="PROSITE" id="PS51508">
    <property type="entry name" value="CKK"/>
    <property type="match status" value="1"/>
</dbReference>
<organism>
    <name type="scientific">Homo sapiens</name>
    <name type="common">Human</name>
    <dbReference type="NCBI Taxonomy" id="9606"/>
    <lineage>
        <taxon>Eukaryota</taxon>
        <taxon>Metazoa</taxon>
        <taxon>Chordata</taxon>
        <taxon>Craniata</taxon>
        <taxon>Vertebrata</taxon>
        <taxon>Euteleostomi</taxon>
        <taxon>Mammalia</taxon>
        <taxon>Eutheria</taxon>
        <taxon>Euarchontoglires</taxon>
        <taxon>Primates</taxon>
        <taxon>Haplorrhini</taxon>
        <taxon>Catarrhini</taxon>
        <taxon>Hominidae</taxon>
        <taxon>Homo</taxon>
    </lineage>
</organism>
<gene>
    <name type="primary">CAMSAP1</name>
</gene>
<keyword id="KW-0002">3D-structure</keyword>
<keyword id="KW-0025">Alternative splicing</keyword>
<keyword id="KW-0175">Coiled coil</keyword>
<keyword id="KW-0963">Cytoplasm</keyword>
<keyword id="KW-0206">Cytoskeleton</keyword>
<keyword id="KW-0225">Disease variant</keyword>
<keyword id="KW-0991">Intellectual disability</keyword>
<keyword id="KW-0451">Lissencephaly</keyword>
<keyword id="KW-0493">Microtubule</keyword>
<keyword id="KW-0597">Phosphoprotein</keyword>
<keyword id="KW-1267">Proteomics identification</keyword>
<keyword id="KW-1185">Reference proteome</keyword>
<feature type="chain" id="PRO_0000316828" description="Calmodulin-regulated spectrin-associated protein 1">
    <location>
        <begin position="1"/>
        <end position="1602"/>
    </location>
</feature>
<feature type="domain" description="Calponin-homology (CH)" evidence="4">
    <location>
        <begin position="216"/>
        <end position="331"/>
    </location>
</feature>
<feature type="domain" description="CKK" evidence="5">
    <location>
        <begin position="1463"/>
        <end position="1597"/>
    </location>
</feature>
<feature type="region of interest" description="Disordered" evidence="6">
    <location>
        <begin position="426"/>
        <end position="471"/>
    </location>
</feature>
<feature type="region of interest" description="Disordered" evidence="6">
    <location>
        <begin position="603"/>
        <end position="637"/>
    </location>
</feature>
<feature type="region of interest" description="Disordered" evidence="6">
    <location>
        <begin position="772"/>
        <end position="808"/>
    </location>
</feature>
<feature type="region of interest" description="Disordered" evidence="6">
    <location>
        <begin position="825"/>
        <end position="870"/>
    </location>
</feature>
<feature type="region of interest" description="Sufficient for interaction with SPTBN1" evidence="9">
    <location>
        <begin position="871"/>
        <end position="892"/>
    </location>
</feature>
<feature type="region of interest" description="Sufficient for interaction with calmodulin">
    <location>
        <begin position="903"/>
        <end position="922"/>
    </location>
</feature>
<feature type="region of interest" description="Disordered" evidence="6">
    <location>
        <begin position="1075"/>
        <end position="1165"/>
    </location>
</feature>
<feature type="region of interest" description="Disordered" evidence="6">
    <location>
        <begin position="1206"/>
        <end position="1226"/>
    </location>
</feature>
<feature type="region of interest" description="Disordered" evidence="6">
    <location>
        <begin position="1301"/>
        <end position="1448"/>
    </location>
</feature>
<feature type="coiled-coil region" evidence="3">
    <location>
        <begin position="873"/>
        <end position="909"/>
    </location>
</feature>
<feature type="coiled-coil region" evidence="3">
    <location>
        <begin position="1016"/>
        <end position="1048"/>
    </location>
</feature>
<feature type="coiled-coil region" evidence="3">
    <location>
        <begin position="1291"/>
        <end position="1343"/>
    </location>
</feature>
<feature type="compositionally biased region" description="Basic and acidic residues" evidence="6">
    <location>
        <begin position="603"/>
        <end position="620"/>
    </location>
</feature>
<feature type="compositionally biased region" description="Basic and acidic residues" evidence="6">
    <location>
        <begin position="772"/>
        <end position="789"/>
    </location>
</feature>
<feature type="compositionally biased region" description="Low complexity" evidence="6">
    <location>
        <begin position="797"/>
        <end position="808"/>
    </location>
</feature>
<feature type="compositionally biased region" description="Low complexity" evidence="6">
    <location>
        <begin position="830"/>
        <end position="841"/>
    </location>
</feature>
<feature type="compositionally biased region" description="Basic and acidic residues" evidence="6">
    <location>
        <begin position="857"/>
        <end position="869"/>
    </location>
</feature>
<feature type="compositionally biased region" description="Basic and acidic residues" evidence="6">
    <location>
        <begin position="1103"/>
        <end position="1114"/>
    </location>
</feature>
<feature type="compositionally biased region" description="Polar residues" evidence="6">
    <location>
        <begin position="1115"/>
        <end position="1127"/>
    </location>
</feature>
<feature type="compositionally biased region" description="Low complexity" evidence="6">
    <location>
        <begin position="1206"/>
        <end position="1220"/>
    </location>
</feature>
<feature type="compositionally biased region" description="Basic and acidic residues" evidence="6">
    <location>
        <begin position="1301"/>
        <end position="1346"/>
    </location>
</feature>
<feature type="compositionally biased region" description="Basic residues" evidence="6">
    <location>
        <begin position="1361"/>
        <end position="1372"/>
    </location>
</feature>
<feature type="compositionally biased region" description="Polar residues" evidence="6">
    <location>
        <begin position="1380"/>
        <end position="1392"/>
    </location>
</feature>
<feature type="compositionally biased region" description="Low complexity" evidence="6">
    <location>
        <begin position="1393"/>
        <end position="1410"/>
    </location>
</feature>
<feature type="modified residue" description="Phosphoserine" evidence="19">
    <location>
        <position position="217"/>
    </location>
</feature>
<feature type="modified residue" description="Phosphoserine" evidence="18">
    <location>
        <position position="371"/>
    </location>
</feature>
<feature type="modified residue" description="Phosphoserine" evidence="18">
    <location>
        <position position="375"/>
    </location>
</feature>
<feature type="modified residue" description="Phosphoserine" evidence="20">
    <location>
        <position position="416"/>
    </location>
</feature>
<feature type="modified residue" description="Phosphoserine" evidence="20">
    <location>
        <position position="431"/>
    </location>
</feature>
<feature type="modified residue" description="Phosphothreonine" evidence="18">
    <location>
        <position position="512"/>
    </location>
</feature>
<feature type="modified residue" description="Phosphoserine" evidence="20">
    <location>
        <position position="563"/>
    </location>
</feature>
<feature type="modified residue" description="Phosphoserine" evidence="18">
    <location>
        <position position="575"/>
    </location>
</feature>
<feature type="modified residue" description="Phosphoserine" evidence="18">
    <location>
        <position position="589"/>
    </location>
</feature>
<feature type="modified residue" description="Phosphoserine" evidence="20">
    <location>
        <position position="629"/>
    </location>
</feature>
<feature type="modified residue" description="Phosphoserine" evidence="17 20">
    <location>
        <position position="722"/>
    </location>
</feature>
<feature type="modified residue" description="Phosphoserine" evidence="1">
    <location>
        <position position="728"/>
    </location>
</feature>
<feature type="modified residue" description="Phosphoserine" evidence="2">
    <location>
        <position position="738"/>
    </location>
</feature>
<feature type="modified residue" description="Phosphoserine" evidence="2">
    <location>
        <position position="740"/>
    </location>
</feature>
<feature type="modified residue" description="Phosphoserine" evidence="20">
    <location>
        <position position="1080"/>
    </location>
</feature>
<feature type="modified residue" description="Phosphoserine" evidence="20">
    <location>
        <position position="1398"/>
    </location>
</feature>
<feature type="modified residue" description="Phosphoserine" evidence="1">
    <location>
        <position position="1427"/>
    </location>
</feature>
<feature type="modified residue" description="Phosphotyrosine" evidence="16">
    <location>
        <position position="1537"/>
    </location>
</feature>
<feature type="splice variant" id="VSP_030800" description="In isoform 2." evidence="14">
    <location>
        <begin position="1"/>
        <end position="278"/>
    </location>
</feature>
<feature type="splice variant" id="VSP_030801" description="In isoform 3." evidence="13">
    <original>K</original>
    <variation>KSPSKWYWKLVP</variation>
    <location>
        <position position="222"/>
    </location>
</feature>
<feature type="sequence variant" id="VAR_038398" description="In dbSNP:rs35639321.">
    <original>A</original>
    <variation>V</variation>
    <location>
        <position position="476"/>
    </location>
</feature>
<feature type="sequence variant" id="VAR_088401" description="In CDCBM12." evidence="12">
    <location>
        <begin position="611"/>
        <end position="1602"/>
    </location>
</feature>
<feature type="sequence variant" id="VAR_088402" description="In CDCBM12." evidence="12">
    <location>
        <begin position="880"/>
        <end position="1602"/>
    </location>
</feature>
<feature type="sequence variant" id="VAR_088403" description="In CDCBM12." evidence="12">
    <location>
        <begin position="1044"/>
        <end position="1602"/>
    </location>
</feature>
<feature type="sequence variant" id="VAR_088404" description="In CDCBM12." evidence="12">
    <location>
        <begin position="1398"/>
        <end position="1602"/>
    </location>
</feature>
<feature type="mutagenesis site" description="Loss of interaction with SPTBN1." evidence="9">
    <original>LEEK</original>
    <variation>AAAA</variation>
    <location>
        <begin position="885"/>
        <end position="888"/>
    </location>
</feature>
<feature type="sequence conflict" description="In Ref. 3; AAH12778." evidence="15" ref="3">
    <original>Q</original>
    <variation>H</variation>
    <location>
        <position position="823"/>
    </location>
</feature>
<proteinExistence type="evidence at protein level"/>
<reference key="1">
    <citation type="journal article" date="2009" name="Mol. Biol. Evol.">
        <title>The CKK domain (DUF1781) binds microtubules and defines the CAMSAP/ssp4 family of animal proteins.</title>
        <authorList>
            <person name="Baines A.J."/>
            <person name="Bignone P.A."/>
            <person name="King M.D.A."/>
            <person name="Maggs A.M."/>
            <person name="Bennett P.M."/>
            <person name="Pinder J.C."/>
            <person name="Phillips G.W."/>
        </authorList>
    </citation>
    <scope>NUCLEOTIDE SEQUENCE [MRNA] (ISOFORM 2)</scope>
    <scope>FUNCTION</scope>
    <scope>SUBCELLULAR LOCATION</scope>
    <scope>DOMAIN CKK</scope>
    <source>
        <tissue>Placenta</tissue>
    </source>
</reference>
<reference key="2">
    <citation type="journal article" date="2004" name="Nature">
        <title>DNA sequence and analysis of human chromosome 9.</title>
        <authorList>
            <person name="Humphray S.J."/>
            <person name="Oliver K."/>
            <person name="Hunt A.R."/>
            <person name="Plumb R.W."/>
            <person name="Loveland J.E."/>
            <person name="Howe K.L."/>
            <person name="Andrews T.D."/>
            <person name="Searle S."/>
            <person name="Hunt S.E."/>
            <person name="Scott C.E."/>
            <person name="Jones M.C."/>
            <person name="Ainscough R."/>
            <person name="Almeida J.P."/>
            <person name="Ambrose K.D."/>
            <person name="Ashwell R.I.S."/>
            <person name="Babbage A.K."/>
            <person name="Babbage S."/>
            <person name="Bagguley C.L."/>
            <person name="Bailey J."/>
            <person name="Banerjee R."/>
            <person name="Barker D.J."/>
            <person name="Barlow K.F."/>
            <person name="Bates K."/>
            <person name="Beasley H."/>
            <person name="Beasley O."/>
            <person name="Bird C.P."/>
            <person name="Bray-Allen S."/>
            <person name="Brown A.J."/>
            <person name="Brown J.Y."/>
            <person name="Burford D."/>
            <person name="Burrill W."/>
            <person name="Burton J."/>
            <person name="Carder C."/>
            <person name="Carter N.P."/>
            <person name="Chapman J.C."/>
            <person name="Chen Y."/>
            <person name="Clarke G."/>
            <person name="Clark S.Y."/>
            <person name="Clee C.M."/>
            <person name="Clegg S."/>
            <person name="Collier R.E."/>
            <person name="Corby N."/>
            <person name="Crosier M."/>
            <person name="Cummings A.T."/>
            <person name="Davies J."/>
            <person name="Dhami P."/>
            <person name="Dunn M."/>
            <person name="Dutta I."/>
            <person name="Dyer L.W."/>
            <person name="Earthrowl M.E."/>
            <person name="Faulkner L."/>
            <person name="Fleming C.J."/>
            <person name="Frankish A."/>
            <person name="Frankland J.A."/>
            <person name="French L."/>
            <person name="Fricker D.G."/>
            <person name="Garner P."/>
            <person name="Garnett J."/>
            <person name="Ghori J."/>
            <person name="Gilbert J.G.R."/>
            <person name="Glison C."/>
            <person name="Grafham D.V."/>
            <person name="Gribble S."/>
            <person name="Griffiths C."/>
            <person name="Griffiths-Jones S."/>
            <person name="Grocock R."/>
            <person name="Guy J."/>
            <person name="Hall R.E."/>
            <person name="Hammond S."/>
            <person name="Harley J.L."/>
            <person name="Harrison E.S.I."/>
            <person name="Hart E.A."/>
            <person name="Heath P.D."/>
            <person name="Henderson C.D."/>
            <person name="Hopkins B.L."/>
            <person name="Howard P.J."/>
            <person name="Howden P.J."/>
            <person name="Huckle E."/>
            <person name="Johnson C."/>
            <person name="Johnson D."/>
            <person name="Joy A.A."/>
            <person name="Kay M."/>
            <person name="Keenan S."/>
            <person name="Kershaw J.K."/>
            <person name="Kimberley A.M."/>
            <person name="King A."/>
            <person name="Knights A."/>
            <person name="Laird G.K."/>
            <person name="Langford C."/>
            <person name="Lawlor S."/>
            <person name="Leongamornlert D.A."/>
            <person name="Leversha M."/>
            <person name="Lloyd C."/>
            <person name="Lloyd D.M."/>
            <person name="Lovell J."/>
            <person name="Martin S."/>
            <person name="Mashreghi-Mohammadi M."/>
            <person name="Matthews L."/>
            <person name="McLaren S."/>
            <person name="McLay K.E."/>
            <person name="McMurray A."/>
            <person name="Milne S."/>
            <person name="Nickerson T."/>
            <person name="Nisbett J."/>
            <person name="Nordsiek G."/>
            <person name="Pearce A.V."/>
            <person name="Peck A.I."/>
            <person name="Porter K.M."/>
            <person name="Pandian R."/>
            <person name="Pelan S."/>
            <person name="Phillimore B."/>
            <person name="Povey S."/>
            <person name="Ramsey Y."/>
            <person name="Rand V."/>
            <person name="Scharfe M."/>
            <person name="Sehra H.K."/>
            <person name="Shownkeen R."/>
            <person name="Sims S.K."/>
            <person name="Skuce C.D."/>
            <person name="Smith M."/>
            <person name="Steward C.A."/>
            <person name="Swarbreck D."/>
            <person name="Sycamore N."/>
            <person name="Tester J."/>
            <person name="Thorpe A."/>
            <person name="Tracey A."/>
            <person name="Tromans A."/>
            <person name="Thomas D.W."/>
            <person name="Wall M."/>
            <person name="Wallis J.M."/>
            <person name="West A.P."/>
            <person name="Whitehead S.L."/>
            <person name="Willey D.L."/>
            <person name="Williams S.A."/>
            <person name="Wilming L."/>
            <person name="Wray P.W."/>
            <person name="Young L."/>
            <person name="Ashurst J.L."/>
            <person name="Coulson A."/>
            <person name="Blocker H."/>
            <person name="Durbin R.M."/>
            <person name="Sulston J.E."/>
            <person name="Hubbard T."/>
            <person name="Jackson M.J."/>
            <person name="Bentley D.R."/>
            <person name="Beck S."/>
            <person name="Rogers J."/>
            <person name="Dunham I."/>
        </authorList>
    </citation>
    <scope>NUCLEOTIDE SEQUENCE [LARGE SCALE GENOMIC DNA]</scope>
</reference>
<reference key="3">
    <citation type="journal article" date="2004" name="Genome Res.">
        <title>The status, quality, and expansion of the NIH full-length cDNA project: the Mammalian Gene Collection (MGC).</title>
        <authorList>
            <consortium name="The MGC Project Team"/>
        </authorList>
    </citation>
    <scope>NUCLEOTIDE SEQUENCE [LARGE SCALE MRNA] OF 126-1602 (ISOFORM 3)</scope>
    <scope>NUCLEOTIDE SEQUENCE [LARGE SCALE MRNA] OF 668-1602 (ISOFORM 1)</scope>
    <source>
        <tissue>Brain</tissue>
        <tissue>Eye</tissue>
        <tissue>Lung</tissue>
    </source>
</reference>
<reference key="4">
    <citation type="journal article" date="2007" name="BMC Genomics">
        <title>The full-ORF clone resource of the German cDNA consortium.</title>
        <authorList>
            <person name="Bechtel S."/>
            <person name="Rosenfelder H."/>
            <person name="Duda A."/>
            <person name="Schmidt C.P."/>
            <person name="Ernst U."/>
            <person name="Wellenreuther R."/>
            <person name="Mehrle A."/>
            <person name="Schuster C."/>
            <person name="Bahr A."/>
            <person name="Bloecker H."/>
            <person name="Heubner D."/>
            <person name="Hoerlein A."/>
            <person name="Michel G."/>
            <person name="Wedler H."/>
            <person name="Koehrer K."/>
            <person name="Ottenwaelder B."/>
            <person name="Poustka A."/>
            <person name="Wiemann S."/>
            <person name="Schupp I."/>
        </authorList>
    </citation>
    <scope>NUCLEOTIDE SEQUENCE [LARGE SCALE MRNA] OF 494-789 AND 1217-1602 (ISOFORM 1)</scope>
    <source>
        <tissue>Testis</tissue>
    </source>
</reference>
<reference key="5">
    <citation type="journal article" date="2005" name="Nat. Biotechnol.">
        <title>Immunoaffinity profiling of tyrosine phosphorylation in cancer cells.</title>
        <authorList>
            <person name="Rush J."/>
            <person name="Moritz A."/>
            <person name="Lee K.A."/>
            <person name="Guo A."/>
            <person name="Goss V.L."/>
            <person name="Spek E.J."/>
            <person name="Zhang H."/>
            <person name="Zha X.-M."/>
            <person name="Polakiewicz R.D."/>
            <person name="Comb M.J."/>
        </authorList>
    </citation>
    <scope>PHOSPHORYLATION [LARGE SCALE ANALYSIS] AT TYR-1537</scope>
    <scope>IDENTIFICATION BY MASS SPECTROMETRY [LARGE SCALE ANALYSIS]</scope>
</reference>
<reference key="6">
    <citation type="journal article" date="2006" name="Cell">
        <title>Global, in vivo, and site-specific phosphorylation dynamics in signaling networks.</title>
        <authorList>
            <person name="Olsen J.V."/>
            <person name="Blagoev B."/>
            <person name="Gnad F."/>
            <person name="Macek B."/>
            <person name="Kumar C."/>
            <person name="Mortensen P."/>
            <person name="Mann M."/>
        </authorList>
    </citation>
    <scope>PHOSPHORYLATION [LARGE SCALE ANALYSIS] AT SER-722</scope>
    <scope>IDENTIFICATION BY MASS SPECTROMETRY [LARGE SCALE ANALYSIS]</scope>
    <source>
        <tissue>Cervix carcinoma</tissue>
    </source>
</reference>
<reference key="7">
    <citation type="journal article" date="2008" name="Proc. Natl. Acad. Sci. U.S.A.">
        <title>A quantitative atlas of mitotic phosphorylation.</title>
        <authorList>
            <person name="Dephoure N."/>
            <person name="Zhou C."/>
            <person name="Villen J."/>
            <person name="Beausoleil S.A."/>
            <person name="Bakalarski C.E."/>
            <person name="Elledge S.J."/>
            <person name="Gygi S.P."/>
        </authorList>
    </citation>
    <scope>PHOSPHORYLATION [LARGE SCALE ANALYSIS] AT SER-371; SER-375; THR-512; SER-575 AND SER-589</scope>
    <scope>IDENTIFICATION BY MASS SPECTROMETRY [LARGE SCALE ANALYSIS]</scope>
    <source>
        <tissue>Cervix carcinoma</tissue>
    </source>
</reference>
<reference key="8">
    <citation type="journal article" date="2009" name="Sci. Signal.">
        <title>Quantitative phosphoproteomic analysis of T cell receptor signaling reveals system-wide modulation of protein-protein interactions.</title>
        <authorList>
            <person name="Mayya V."/>
            <person name="Lundgren D.H."/>
            <person name="Hwang S.-I."/>
            <person name="Rezaul K."/>
            <person name="Wu L."/>
            <person name="Eng J.K."/>
            <person name="Rodionov V."/>
            <person name="Han D.K."/>
        </authorList>
    </citation>
    <scope>IDENTIFICATION BY MASS SPECTROMETRY [LARGE SCALE ANALYSIS]</scope>
    <source>
        <tissue>Leukemic T-cell</tissue>
    </source>
</reference>
<reference key="9">
    <citation type="journal article" date="2010" name="Sci. Signal.">
        <title>Quantitative phosphoproteomics reveals widespread full phosphorylation site occupancy during mitosis.</title>
        <authorList>
            <person name="Olsen J.V."/>
            <person name="Vermeulen M."/>
            <person name="Santamaria A."/>
            <person name="Kumar C."/>
            <person name="Miller M.L."/>
            <person name="Jensen L.J."/>
            <person name="Gnad F."/>
            <person name="Cox J."/>
            <person name="Jensen T.S."/>
            <person name="Nigg E.A."/>
            <person name="Brunak S."/>
            <person name="Mann M."/>
        </authorList>
    </citation>
    <scope>PHOSPHORYLATION [LARGE SCALE ANALYSIS] AT SER-217</scope>
    <scope>IDENTIFICATION BY MASS SPECTROMETRY [LARGE SCALE ANALYSIS]</scope>
    <source>
        <tissue>Cervix carcinoma</tissue>
    </source>
</reference>
<reference key="10">
    <citation type="journal article" date="2011" name="BMC Biol.">
        <title>Identification and characterization of a set of conserved and new regulators of cytoskeletal organisation, cell morphology and migration.</title>
        <authorList>
            <person name="Bai S.W."/>
            <person name="Herrera-Abreu M.T."/>
            <person name="Rohn J.L."/>
            <person name="Racine V."/>
            <person name="Tajadura V."/>
            <person name="Suryavanshi N."/>
            <person name="Bechtel S."/>
            <person name="Wiemann S."/>
            <person name="Baum B."/>
            <person name="Ridley A.J."/>
        </authorList>
    </citation>
    <scope>FUNCTION</scope>
</reference>
<reference key="11">
    <citation type="journal article" date="2013" name="J. Proteome Res.">
        <title>Toward a comprehensive characterization of a human cancer cell phosphoproteome.</title>
        <authorList>
            <person name="Zhou H."/>
            <person name="Di Palma S."/>
            <person name="Preisinger C."/>
            <person name="Peng M."/>
            <person name="Polat A.N."/>
            <person name="Heck A.J."/>
            <person name="Mohammed S."/>
        </authorList>
    </citation>
    <scope>PHOSPHORYLATION [LARGE SCALE ANALYSIS] AT SER-416; SER-431; SER-563; SER-629; SER-722; SER-1080 AND SER-1398</scope>
    <scope>IDENTIFICATION BY MASS SPECTROMETRY [LARGE SCALE ANALYSIS]</scope>
    <source>
        <tissue>Cervix carcinoma</tissue>
        <tissue>Erythroleukemia</tissue>
    </source>
</reference>
<reference key="12">
    <citation type="journal article" date="2014" name="Dev. Cell">
        <title>Microtubule minus-end stabilization by polymerization-driven CAMSAP deposition.</title>
        <authorList>
            <person name="Jiang K."/>
            <person name="Hua S."/>
            <person name="Mohan R."/>
            <person name="Grigoriev I."/>
            <person name="Yau K.W."/>
            <person name="Liu Q."/>
            <person name="Katrukha E.A."/>
            <person name="Altelaar A.F."/>
            <person name="Heck A.J."/>
            <person name="Hoogenraad C.C."/>
            <person name="Akhmanova A."/>
        </authorList>
    </citation>
    <scope>FUNCTION</scope>
    <scope>SUBCELLULAR LOCATION</scope>
</reference>
<reference key="13">
    <citation type="journal article" date="2014" name="J. Proteomics">
        <title>An enzyme assisted RP-RPLC approach for in-depth analysis of human liver phosphoproteome.</title>
        <authorList>
            <person name="Bian Y."/>
            <person name="Song C."/>
            <person name="Cheng K."/>
            <person name="Dong M."/>
            <person name="Wang F."/>
            <person name="Huang J."/>
            <person name="Sun D."/>
            <person name="Wang L."/>
            <person name="Ye M."/>
            <person name="Zou H."/>
        </authorList>
    </citation>
    <scope>IDENTIFICATION BY MASS SPECTROMETRY [LARGE SCALE ANALYSIS]</scope>
    <source>
        <tissue>Liver</tissue>
    </source>
</reference>
<reference key="14">
    <citation type="journal article" date="2014" name="Proc. Natl. Acad. Sci. U.S.A.">
        <title>Regulation of microtubule minus-end dynamics by CAMSAPs and Patronin.</title>
        <authorList>
            <person name="Hendershott M.C."/>
            <person name="Vale R.D."/>
        </authorList>
    </citation>
    <scope>FUNCTION</scope>
    <scope>SUBCELLULAR LOCATION</scope>
</reference>
<reference key="15">
    <citation type="journal article" date="2014" name="J. Neurochem.">
        <title>A conserved sequence in CAMSAP1 (calmodulin regulated spectrin-associated protein 1) links its interaction with spectrin and calmodulin to neurite outgrowth.</title>
        <authorList>
            <person name="King M.D."/>
            <person name="Phillips G.W."/>
            <person name="Bignone P.A."/>
            <person name="Hayes N.V."/>
            <person name="Pinder J.C."/>
            <person name="Baines A.J."/>
        </authorList>
    </citation>
    <scope>FUNCTION</scope>
    <scope>INTERACTION WITH SPTBN1</scope>
    <scope>MUTAGENESIS OF 885-LEU--LYS-888</scope>
</reference>
<reference key="16">
    <citation type="journal article" date="2022" name="Am. J. Hum. Genet.">
        <title>Bi-allelic CAMSAP1 variants cause a clinically recognizable neuronal migration disorder.</title>
        <authorList>
            <person name="Khalaf-Nazzal R."/>
            <person name="Fasham J."/>
            <person name="Inskeep K.A."/>
            <person name="Blizzard L.E."/>
            <person name="Leslie J.S."/>
            <person name="Wakeling M.N."/>
            <person name="Ubeyratna N."/>
            <person name="Mitani T."/>
            <person name="Griffith J.L."/>
            <person name="Baker W."/>
            <person name="Al-Hijawi F."/>
            <person name="Keough K.C."/>
            <person name="Gezdirici A."/>
            <person name="Pena L."/>
            <person name="Spaeth C.G."/>
            <person name="Turnpenny P.D."/>
            <person name="Walsh J.R."/>
            <person name="Ray R."/>
            <person name="Neilson A."/>
            <person name="Kouranova E."/>
            <person name="Cui X."/>
            <person name="Curiel D.T."/>
            <person name="Pehlivan D."/>
            <person name="Akdemir Z.C."/>
            <person name="Posey J.E."/>
            <person name="Lupski J.R."/>
            <person name="Dobyns W.B."/>
            <person name="Stottmann R.W."/>
            <person name="Crosby A.H."/>
            <person name="Baple E.L."/>
        </authorList>
    </citation>
    <scope>VARIANTS CDCBM12 611-LYS--LYS-1602 DEL; 880-GLN--LYS-1602 DEL; 1044-GLN--LYS-1602 DEL AND 1398-SER--LYS-1602 DEL</scope>
    <scope>INVOLVEMENT IN CDCBM12</scope>
</reference>
<comment type="function">
    <text evidence="7 8 9 10 11">Key microtubule-organizing protein that specifically binds the minus-end of non-centrosomal microtubules and regulates their dynamics and organization (PubMed:19508979, PubMed:21834987, PubMed:24117850, PubMed:24486153, PubMed:24706919). Specifically recognizes growing microtubule minus-ends and stabilizes microtubules (PubMed:24486153, PubMed:24706919). Acts on free microtubule minus-ends that are not capped by microtubule-nucleating proteins or other factors and protects microtubule minus-ends from depolymerization (PubMed:24486153, PubMed:24706919). In contrast to CAMSAP2 and CAMSAP3, tracks along the growing tips of minus-end microtubules without significantly affecting the polymerization rate: binds at the very tip of the microtubules minus-end and acts as a minus-end tracking protein (-TIP) that dissociates from microtubules after allowing tubulin incorporation (PubMed:24486153, PubMed:24706919). Through interaction with spectrin may regulate neurite outgrowth (PubMed:24117850).</text>
</comment>
<comment type="subunit">
    <text evidence="9">Interacts with spectrin via SPTBN1; the interaction is direct (PubMed:24117850). Interacts with calmodulin; calcium-dependent it prevents interaction with spectrin (PubMed:24117850).</text>
</comment>
<comment type="interaction">
    <interactant intactId="EBI-12036363">
        <id>Q5T5Y3-3</id>
    </interactant>
    <interactant intactId="EBI-1188472">
        <id>P78358</id>
        <label>CTAG1B</label>
    </interactant>
    <organismsDiffer>false</organismsDiffer>
    <experiments>3</experiments>
</comment>
<comment type="interaction">
    <interactant intactId="EBI-12036363">
        <id>Q5T5Y3-3</id>
    </interactant>
    <interactant intactId="EBI-2805516">
        <id>P31321</id>
        <label>PRKAR1B</label>
    </interactant>
    <organismsDiffer>false</organismsDiffer>
    <experiments>6</experiments>
</comment>
<comment type="subcellular location">
    <subcellularLocation>
        <location evidence="7">Cytoplasm</location>
        <location evidence="7">Cytoskeleton</location>
    </subcellularLocation>
    <text evidence="7 10 11">Associates with the minus-end of microtubules (PubMed:24486153, PubMed:24706919). In contrast to CAMSAP2 and CAMSAP3, does not form stretches of decorated microtubule minus-ends (PubMed:24486153, PubMed:24706919).</text>
</comment>
<comment type="alternative products">
    <event type="alternative splicing"/>
    <isoform>
        <id>Q5T5Y3-1</id>
        <name>1</name>
        <sequence type="displayed"/>
    </isoform>
    <isoform>
        <id>Q5T5Y3-2</id>
        <name>2</name>
        <sequence type="described" ref="VSP_030800"/>
    </isoform>
    <isoform>
        <id>Q5T5Y3-3</id>
        <name>3</name>
        <sequence type="described" ref="VSP_030801"/>
    </isoform>
</comment>
<comment type="domain">
    <text evidence="5 7">The CKK domain binds microtubules.</text>
</comment>
<comment type="disease" evidence="12">
    <disease id="DI-06642">
        <name>Cortical dysplasia, complex, with other brain malformations 12</name>
        <acronym>CDCBM12</acronym>
        <description>An autosomal recessive disorder of aberrant neuronal migration during brain development. CDCBM12 is characterized by severe to profound neurodevelopmental delay, microcephaly, cortical visual impairment, craniofacial dysmorphism, and seizures. Brain imaging shows lissencephaly, severe hypoplasia or absence of the corpus callosum, cerebellar hypodysplasia, and dysplasia of the basal ganglia, hippocampus and midbrain.</description>
        <dbReference type="MIM" id="620316"/>
    </disease>
    <text>The disease is caused by variants affecting the gene represented in this entry.</text>
</comment>
<comment type="similarity">
    <text evidence="5">Belongs to the CAMSAP1 family.</text>
</comment>
<comment type="sequence caution" evidence="15">
    <conflict type="erroneous initiation">
        <sequence resource="EMBL-CDS" id="AAI30581"/>
    </conflict>
    <text>Truncated N-terminus.</text>
</comment>
<evidence type="ECO:0000250" key="1">
    <source>
        <dbReference type="UniProtKB" id="A2AHC3"/>
    </source>
</evidence>
<evidence type="ECO:0000250" key="2">
    <source>
        <dbReference type="UniProtKB" id="D3Z8E6"/>
    </source>
</evidence>
<evidence type="ECO:0000255" key="3"/>
<evidence type="ECO:0000255" key="4">
    <source>
        <dbReference type="PROSITE-ProRule" id="PRU00044"/>
    </source>
</evidence>
<evidence type="ECO:0000255" key="5">
    <source>
        <dbReference type="PROSITE-ProRule" id="PRU00841"/>
    </source>
</evidence>
<evidence type="ECO:0000256" key="6">
    <source>
        <dbReference type="SAM" id="MobiDB-lite"/>
    </source>
</evidence>
<evidence type="ECO:0000269" key="7">
    <source>
    </source>
</evidence>
<evidence type="ECO:0000269" key="8">
    <source>
    </source>
</evidence>
<evidence type="ECO:0000269" key="9">
    <source>
    </source>
</evidence>
<evidence type="ECO:0000269" key="10">
    <source>
    </source>
</evidence>
<evidence type="ECO:0000269" key="11">
    <source>
    </source>
</evidence>
<evidence type="ECO:0000269" key="12">
    <source>
    </source>
</evidence>
<evidence type="ECO:0000303" key="13">
    <source>
    </source>
</evidence>
<evidence type="ECO:0000303" key="14">
    <source>
    </source>
</evidence>
<evidence type="ECO:0000305" key="15"/>
<evidence type="ECO:0007744" key="16">
    <source>
    </source>
</evidence>
<evidence type="ECO:0007744" key="17">
    <source>
    </source>
</evidence>
<evidence type="ECO:0007744" key="18">
    <source>
    </source>
</evidence>
<evidence type="ECO:0007744" key="19">
    <source>
    </source>
</evidence>
<evidence type="ECO:0007744" key="20">
    <source>
    </source>
</evidence>
<name>CAMP1_HUMAN</name>
<accession>Q5T5Y3</accession>
<accession>A1L4L2</accession>
<accession>B2REB2</accession>
<accession>B2REB3</accession>
<accession>Q70W33</accession>
<accession>Q8NCY0</accession>
<accession>Q96E80</accession>
<accession>Q96FM3</accession>
<accession>Q9UFJ5</accession>